<organism>
    <name type="scientific">Escherichia coli (strain B / REL606)</name>
    <dbReference type="NCBI Taxonomy" id="413997"/>
    <lineage>
        <taxon>Bacteria</taxon>
        <taxon>Pseudomonadati</taxon>
        <taxon>Pseudomonadota</taxon>
        <taxon>Gammaproteobacteria</taxon>
        <taxon>Enterobacterales</taxon>
        <taxon>Enterobacteriaceae</taxon>
        <taxon>Escherichia</taxon>
    </lineage>
</organism>
<evidence type="ECO:0000255" key="1">
    <source>
        <dbReference type="HAMAP-Rule" id="MF_00831"/>
    </source>
</evidence>
<keyword id="KW-0378">Hydrolase</keyword>
<name>RUTC_ECOBR</name>
<reference key="1">
    <citation type="journal article" date="2009" name="J. Mol. Biol.">
        <title>Genome sequences of Escherichia coli B strains REL606 and BL21(DE3).</title>
        <authorList>
            <person name="Jeong H."/>
            <person name="Barbe V."/>
            <person name="Lee C.H."/>
            <person name="Vallenet D."/>
            <person name="Yu D.S."/>
            <person name="Choi S.H."/>
            <person name="Couloux A."/>
            <person name="Lee S.W."/>
            <person name="Yoon S.H."/>
            <person name="Cattolico L."/>
            <person name="Hur C.G."/>
            <person name="Park H.S."/>
            <person name="Segurens B."/>
            <person name="Kim S.C."/>
            <person name="Oh T.K."/>
            <person name="Lenski R.E."/>
            <person name="Studier F.W."/>
            <person name="Daegelen P."/>
            <person name="Kim J.F."/>
        </authorList>
    </citation>
    <scope>NUCLEOTIDE SEQUENCE [LARGE SCALE GENOMIC DNA]</scope>
    <source>
        <strain>B / REL606</strain>
    </source>
</reference>
<comment type="function">
    <text evidence="1">Involved in pyrimidine catabolism. Catalyzes the deamination of 3-aminoacrylate to malonic semialdehyde, a reaction that can also occur spontaneously. RutC may facilitate the reaction and modulate the metabolic fitness, rather than catalyzing essential functions.</text>
</comment>
<comment type="catalytic activity">
    <reaction evidence="1">
        <text>(Z)-3-aminoacrylate + H2O + H(+) = 3-oxopropanoate + NH4(+)</text>
        <dbReference type="Rhea" id="RHEA:34947"/>
        <dbReference type="ChEBI" id="CHEBI:15377"/>
        <dbReference type="ChEBI" id="CHEBI:15378"/>
        <dbReference type="ChEBI" id="CHEBI:28938"/>
        <dbReference type="ChEBI" id="CHEBI:33190"/>
        <dbReference type="ChEBI" id="CHEBI:59894"/>
    </reaction>
</comment>
<comment type="subunit">
    <text evidence="1">Homotrimer.</text>
</comment>
<comment type="similarity">
    <text evidence="1">Belongs to the RutC family.</text>
</comment>
<feature type="chain" id="PRO_0000402726" description="3-aminoacrylate deaminase RutC">
    <location>
        <begin position="1"/>
        <end position="128"/>
    </location>
</feature>
<dbReference type="EC" id="3.5.-.-" evidence="1"/>
<dbReference type="EMBL" id="CP000819">
    <property type="protein sequence ID" value="ACT38695.1"/>
    <property type="molecule type" value="Genomic_DNA"/>
</dbReference>
<dbReference type="RefSeq" id="WP_001126780.1">
    <property type="nucleotide sequence ID" value="NC_012967.1"/>
</dbReference>
<dbReference type="SMR" id="C6UFC1"/>
<dbReference type="GeneID" id="75171086"/>
<dbReference type="KEGG" id="ebr:ECB_01013"/>
<dbReference type="HOGENOM" id="CLU_100715_7_3_6"/>
<dbReference type="BioCyc" id="ECOL413997:GCQD-1213-MONOMER"/>
<dbReference type="GO" id="GO:0005829">
    <property type="term" value="C:cytosol"/>
    <property type="evidence" value="ECO:0007669"/>
    <property type="project" value="TreeGrafter"/>
</dbReference>
<dbReference type="GO" id="GO:0019239">
    <property type="term" value="F:deaminase activity"/>
    <property type="evidence" value="ECO:0007669"/>
    <property type="project" value="TreeGrafter"/>
</dbReference>
<dbReference type="GO" id="GO:0019740">
    <property type="term" value="P:nitrogen utilization"/>
    <property type="evidence" value="ECO:0007669"/>
    <property type="project" value="UniProtKB-UniRule"/>
</dbReference>
<dbReference type="GO" id="GO:0006212">
    <property type="term" value="P:uracil catabolic process"/>
    <property type="evidence" value="ECO:0007669"/>
    <property type="project" value="UniProtKB-UniRule"/>
</dbReference>
<dbReference type="CDD" id="cd00448">
    <property type="entry name" value="YjgF_YER057c_UK114_family"/>
    <property type="match status" value="1"/>
</dbReference>
<dbReference type="FunFam" id="3.30.1330.40:FF:000003">
    <property type="entry name" value="Putative aminoacrylate peracid reductase RutC"/>
    <property type="match status" value="1"/>
</dbReference>
<dbReference type="Gene3D" id="3.30.1330.40">
    <property type="entry name" value="RutC-like"/>
    <property type="match status" value="1"/>
</dbReference>
<dbReference type="HAMAP" id="MF_00831">
    <property type="entry name" value="RutC"/>
    <property type="match status" value="1"/>
</dbReference>
<dbReference type="InterPro" id="IPR019897">
    <property type="entry name" value="RidA_CS"/>
</dbReference>
<dbReference type="InterPro" id="IPR019898">
    <property type="entry name" value="RutC"/>
</dbReference>
<dbReference type="InterPro" id="IPR035959">
    <property type="entry name" value="RutC-like_sf"/>
</dbReference>
<dbReference type="InterPro" id="IPR006175">
    <property type="entry name" value="YjgF/YER057c/UK114"/>
</dbReference>
<dbReference type="NCBIfam" id="TIGR03610">
    <property type="entry name" value="RutC"/>
    <property type="match status" value="1"/>
</dbReference>
<dbReference type="PANTHER" id="PTHR11803">
    <property type="entry name" value="2-IMINOBUTANOATE/2-IMINOPROPANOATE DEAMINASE RIDA"/>
    <property type="match status" value="1"/>
</dbReference>
<dbReference type="PANTHER" id="PTHR11803:SF58">
    <property type="entry name" value="PROTEIN HMF1-RELATED"/>
    <property type="match status" value="1"/>
</dbReference>
<dbReference type="Pfam" id="PF01042">
    <property type="entry name" value="Ribonuc_L-PSP"/>
    <property type="match status" value="1"/>
</dbReference>
<dbReference type="SUPFAM" id="SSF55298">
    <property type="entry name" value="YjgF-like"/>
    <property type="match status" value="1"/>
</dbReference>
<dbReference type="PROSITE" id="PS01094">
    <property type="entry name" value="UPF0076"/>
    <property type="match status" value="1"/>
</dbReference>
<accession>C6UFC1</accession>
<proteinExistence type="inferred from homology"/>
<gene>
    <name evidence="1" type="primary">rutC</name>
    <name type="ordered locus">ECB_01013</name>
</gene>
<sequence length="128" mass="13763">MPKSVIIPAGSSAPLAPFVPGTLADGVVYVSGTLAFDQHNNVLFADDPKAQTRHVLETIRKVIETAGGTMADVTFNSIFITDWKNYAAINEIYAEFFPGDKPARFCIQCGLVKPDALVEIATIAHIAK</sequence>
<protein>
    <recommendedName>
        <fullName evidence="1">3-aminoacrylate deaminase RutC</fullName>
        <shortName evidence="1">3-AA deaminase</shortName>
        <ecNumber evidence="1">3.5.-.-</ecNumber>
    </recommendedName>
</protein>